<reference key="1">
    <citation type="submission" date="2006-03" db="EMBL/GenBank/DDBJ databases">
        <title>Complete sequence of chromosome of Nitrobacter hamburgensis X14.</title>
        <authorList>
            <consortium name="US DOE Joint Genome Institute"/>
            <person name="Copeland A."/>
            <person name="Lucas S."/>
            <person name="Lapidus A."/>
            <person name="Barry K."/>
            <person name="Detter J.C."/>
            <person name="Glavina del Rio T."/>
            <person name="Hammon N."/>
            <person name="Israni S."/>
            <person name="Dalin E."/>
            <person name="Tice H."/>
            <person name="Pitluck S."/>
            <person name="Chain P."/>
            <person name="Malfatti S."/>
            <person name="Shin M."/>
            <person name="Vergez L."/>
            <person name="Schmutz J."/>
            <person name="Larimer F."/>
            <person name="Land M."/>
            <person name="Hauser L."/>
            <person name="Kyrpides N."/>
            <person name="Ivanova N."/>
            <person name="Ward B."/>
            <person name="Arp D."/>
            <person name="Klotz M."/>
            <person name="Stein L."/>
            <person name="O'Mullan G."/>
            <person name="Starkenburg S."/>
            <person name="Sayavedra L."/>
            <person name="Poret-Peterson A.T."/>
            <person name="Gentry M.E."/>
            <person name="Bruce D."/>
            <person name="Richardson P."/>
        </authorList>
    </citation>
    <scope>NUCLEOTIDE SEQUENCE [LARGE SCALE GENOMIC DNA]</scope>
    <source>
        <strain>DSM 10229 / NCIMB 13809 / X14</strain>
    </source>
</reference>
<organism>
    <name type="scientific">Nitrobacter hamburgensis (strain DSM 10229 / NCIMB 13809 / X14)</name>
    <dbReference type="NCBI Taxonomy" id="323097"/>
    <lineage>
        <taxon>Bacteria</taxon>
        <taxon>Pseudomonadati</taxon>
        <taxon>Pseudomonadota</taxon>
        <taxon>Alphaproteobacteria</taxon>
        <taxon>Hyphomicrobiales</taxon>
        <taxon>Nitrobacteraceae</taxon>
        <taxon>Nitrobacter</taxon>
    </lineage>
</organism>
<protein>
    <recommendedName>
        <fullName evidence="1">Small ribosomal subunit protein uS19</fullName>
    </recommendedName>
    <alternativeName>
        <fullName evidence="2">30S ribosomal protein S19</fullName>
    </alternativeName>
</protein>
<dbReference type="EMBL" id="CP000319">
    <property type="protein sequence ID" value="ABE62371.1"/>
    <property type="molecule type" value="Genomic_DNA"/>
</dbReference>
<dbReference type="RefSeq" id="WP_011510058.1">
    <property type="nucleotide sequence ID" value="NC_007964.1"/>
</dbReference>
<dbReference type="SMR" id="Q1QN26"/>
<dbReference type="STRING" id="323097.Nham_1549"/>
<dbReference type="KEGG" id="nha:Nham_1549"/>
<dbReference type="eggNOG" id="COG0185">
    <property type="taxonomic scope" value="Bacteria"/>
</dbReference>
<dbReference type="HOGENOM" id="CLU_144911_0_1_5"/>
<dbReference type="OrthoDB" id="9797833at2"/>
<dbReference type="Proteomes" id="UP000001953">
    <property type="component" value="Chromosome"/>
</dbReference>
<dbReference type="GO" id="GO:0005737">
    <property type="term" value="C:cytoplasm"/>
    <property type="evidence" value="ECO:0007669"/>
    <property type="project" value="UniProtKB-ARBA"/>
</dbReference>
<dbReference type="GO" id="GO:0015935">
    <property type="term" value="C:small ribosomal subunit"/>
    <property type="evidence" value="ECO:0007669"/>
    <property type="project" value="InterPro"/>
</dbReference>
<dbReference type="GO" id="GO:0019843">
    <property type="term" value="F:rRNA binding"/>
    <property type="evidence" value="ECO:0007669"/>
    <property type="project" value="UniProtKB-UniRule"/>
</dbReference>
<dbReference type="GO" id="GO:0003735">
    <property type="term" value="F:structural constituent of ribosome"/>
    <property type="evidence" value="ECO:0007669"/>
    <property type="project" value="InterPro"/>
</dbReference>
<dbReference type="GO" id="GO:0000028">
    <property type="term" value="P:ribosomal small subunit assembly"/>
    <property type="evidence" value="ECO:0007669"/>
    <property type="project" value="TreeGrafter"/>
</dbReference>
<dbReference type="GO" id="GO:0006412">
    <property type="term" value="P:translation"/>
    <property type="evidence" value="ECO:0007669"/>
    <property type="project" value="UniProtKB-UniRule"/>
</dbReference>
<dbReference type="FunFam" id="3.30.860.10:FF:000001">
    <property type="entry name" value="30S ribosomal protein S19"/>
    <property type="match status" value="1"/>
</dbReference>
<dbReference type="Gene3D" id="3.30.860.10">
    <property type="entry name" value="30s Ribosomal Protein S19, Chain A"/>
    <property type="match status" value="1"/>
</dbReference>
<dbReference type="HAMAP" id="MF_00531">
    <property type="entry name" value="Ribosomal_uS19"/>
    <property type="match status" value="1"/>
</dbReference>
<dbReference type="InterPro" id="IPR002222">
    <property type="entry name" value="Ribosomal_uS19"/>
</dbReference>
<dbReference type="InterPro" id="IPR005732">
    <property type="entry name" value="Ribosomal_uS19_bac-type"/>
</dbReference>
<dbReference type="InterPro" id="IPR020934">
    <property type="entry name" value="Ribosomal_uS19_CS"/>
</dbReference>
<dbReference type="InterPro" id="IPR023575">
    <property type="entry name" value="Ribosomal_uS19_SF"/>
</dbReference>
<dbReference type="NCBIfam" id="TIGR01050">
    <property type="entry name" value="rpsS_bact"/>
    <property type="match status" value="1"/>
</dbReference>
<dbReference type="PANTHER" id="PTHR11880">
    <property type="entry name" value="RIBOSOMAL PROTEIN S19P FAMILY MEMBER"/>
    <property type="match status" value="1"/>
</dbReference>
<dbReference type="PANTHER" id="PTHR11880:SF8">
    <property type="entry name" value="SMALL RIBOSOMAL SUBUNIT PROTEIN US19M"/>
    <property type="match status" value="1"/>
</dbReference>
<dbReference type="Pfam" id="PF00203">
    <property type="entry name" value="Ribosomal_S19"/>
    <property type="match status" value="1"/>
</dbReference>
<dbReference type="PIRSF" id="PIRSF002144">
    <property type="entry name" value="Ribosomal_S19"/>
    <property type="match status" value="1"/>
</dbReference>
<dbReference type="PRINTS" id="PR00975">
    <property type="entry name" value="RIBOSOMALS19"/>
</dbReference>
<dbReference type="SUPFAM" id="SSF54570">
    <property type="entry name" value="Ribosomal protein S19"/>
    <property type="match status" value="1"/>
</dbReference>
<dbReference type="PROSITE" id="PS00323">
    <property type="entry name" value="RIBOSOMAL_S19"/>
    <property type="match status" value="1"/>
</dbReference>
<sequence>MVRSVWKGPFVEGSLLKKADAARASGRHDVIKIWSRRSTILPQFVGLVFGVYNGHKHVPVSVNEEMVGHKFGEFSPTRTFHGHSGDKKAKRA</sequence>
<evidence type="ECO:0000255" key="1">
    <source>
        <dbReference type="HAMAP-Rule" id="MF_00531"/>
    </source>
</evidence>
<evidence type="ECO:0000305" key="2"/>
<comment type="function">
    <text evidence="1">Protein S19 forms a complex with S13 that binds strongly to the 16S ribosomal RNA.</text>
</comment>
<comment type="similarity">
    <text evidence="1">Belongs to the universal ribosomal protein uS19 family.</text>
</comment>
<feature type="chain" id="PRO_0000265389" description="Small ribosomal subunit protein uS19">
    <location>
        <begin position="1"/>
        <end position="92"/>
    </location>
</feature>
<keyword id="KW-1185">Reference proteome</keyword>
<keyword id="KW-0687">Ribonucleoprotein</keyword>
<keyword id="KW-0689">Ribosomal protein</keyword>
<keyword id="KW-0694">RNA-binding</keyword>
<keyword id="KW-0699">rRNA-binding</keyword>
<name>RS19_NITHX</name>
<accession>Q1QN26</accession>
<proteinExistence type="inferred from homology"/>
<gene>
    <name evidence="1" type="primary">rpsS</name>
    <name type="ordered locus">Nham_1549</name>
</gene>